<gene>
    <name evidence="2" type="primary">PA</name>
</gene>
<organism>
    <name type="scientific">Influenza A virus (strain A/Gull/Minnesota/945/1980 H13N6)</name>
    <dbReference type="NCBI Taxonomy" id="385597"/>
    <lineage>
        <taxon>Viruses</taxon>
        <taxon>Riboviria</taxon>
        <taxon>Orthornavirae</taxon>
        <taxon>Negarnaviricota</taxon>
        <taxon>Polyploviricotina</taxon>
        <taxon>Insthoviricetes</taxon>
        <taxon>Articulavirales</taxon>
        <taxon>Orthomyxoviridae</taxon>
        <taxon>Alphainfluenzavirus</taxon>
        <taxon>Alphainfluenzavirus influenzae</taxon>
        <taxon>Influenza A virus</taxon>
    </lineage>
</organism>
<comment type="function">
    <text evidence="2">Plays an essential role in viral RNA transcription and replication by forming the heterotrimeric polymerase complex together with PB1 and PB2 subunits. The complex transcribes viral mRNAs by using a unique mechanism called cap-snatching. It consists in the hijacking and cleavage of host capped pre-mRNAs. These short capped RNAs are then used as primers for viral mRNAs. The PB2 subunit is responsible for the binding of the 5' cap of cellular pre-mRNAs which are subsequently cleaved after 10-13 nucleotides by the PA subunit that carries the endonuclease activity.</text>
</comment>
<comment type="cofactor">
    <cofactor evidence="2">
        <name>Mn(2+)</name>
        <dbReference type="ChEBI" id="CHEBI:29035"/>
    </cofactor>
    <text evidence="2">Binds 2 manganese ions per subunit.</text>
</comment>
<comment type="subunit">
    <text evidence="1 2">Influenza RNA polymerase is composed of three subunits: PB1, PB2 and PA. Interacts (via C-terminus) with PB1 (via N-terminus).</text>
</comment>
<comment type="subcellular location">
    <subcellularLocation>
        <location evidence="2">Host cytoplasm</location>
    </subcellularLocation>
    <subcellularLocation>
        <location evidence="2">Host nucleus</location>
    </subcellularLocation>
    <text evidence="1 2">PB1 and PA are transported in the host nucleus as a complex.</text>
</comment>
<comment type="alternative products">
    <event type="ribosomal frameshifting"/>
    <isoform>
        <id>Q20NV4-1</id>
        <name>PA</name>
        <sequence type="displayed"/>
    </isoform>
    <isoform>
        <id>P0DJR4-1</id>
        <name>PA-X</name>
        <sequence type="external"/>
    </isoform>
</comment>
<comment type="PTM">
    <text evidence="1 2">Phosphorylated on serines and threonines by host kinases, including human casein kinase II.</text>
</comment>
<comment type="similarity">
    <text evidence="2">Belongs to the influenza viruses PA family.</text>
</comment>
<feature type="chain" id="PRO_0000279248" description="Polymerase acidic protein">
    <location>
        <begin position="1"/>
        <end position="716"/>
    </location>
</feature>
<feature type="short sequence motif" description="Nuclear localization signal 1 (NLS1)" evidence="1 2">
    <location>
        <begin position="124"/>
        <end position="139"/>
    </location>
</feature>
<feature type="short sequence motif" description="Nuclear localization signal 2 (NLS2)" evidence="1 2">
    <location>
        <begin position="184"/>
        <end position="247"/>
    </location>
</feature>
<feature type="binding site" evidence="2">
    <location>
        <position position="41"/>
    </location>
    <ligand>
        <name>Mn(2+)</name>
        <dbReference type="ChEBI" id="CHEBI:29035"/>
        <label>1</label>
    </ligand>
</feature>
<feature type="binding site" evidence="2">
    <location>
        <position position="80"/>
    </location>
    <ligand>
        <name>Mn(2+)</name>
        <dbReference type="ChEBI" id="CHEBI:29035"/>
        <label>2</label>
    </ligand>
</feature>
<feature type="binding site" evidence="2">
    <location>
        <position position="108"/>
    </location>
    <ligand>
        <name>Mn(2+)</name>
        <dbReference type="ChEBI" id="CHEBI:29035"/>
        <label>1</label>
    </ligand>
</feature>
<feature type="binding site" evidence="2">
    <location>
        <position position="108"/>
    </location>
    <ligand>
        <name>Mn(2+)</name>
        <dbReference type="ChEBI" id="CHEBI:29035"/>
        <label>2</label>
    </ligand>
</feature>
<feature type="binding site" evidence="2">
    <location>
        <position position="119"/>
    </location>
    <ligand>
        <name>Mn(2+)</name>
        <dbReference type="ChEBI" id="CHEBI:29035"/>
        <label>1</label>
    </ligand>
</feature>
<feature type="binding site" evidence="2">
    <location>
        <position position="120"/>
    </location>
    <ligand>
        <name>Mn(2+)</name>
        <dbReference type="ChEBI" id="CHEBI:29035"/>
        <label>1</label>
    </ligand>
</feature>
<proteinExistence type="inferred from homology"/>
<protein>
    <recommendedName>
        <fullName evidence="2">Polymerase acidic protein</fullName>
        <ecNumber evidence="2">3.1.-.-</ecNumber>
    </recommendedName>
    <alternativeName>
        <fullName evidence="2">RNA-directed RNA polymerase subunit P2</fullName>
    </alternativeName>
</protein>
<keyword id="KW-1157">Cap snatching</keyword>
<keyword id="KW-0255">Endonuclease</keyword>
<keyword id="KW-1262">Eukaryotic host gene expression shutoff by virus</keyword>
<keyword id="KW-1191">Eukaryotic host transcription shutoff by virus</keyword>
<keyword id="KW-1035">Host cytoplasm</keyword>
<keyword id="KW-1190">Host gene expression shutoff by virus</keyword>
<keyword id="KW-1048">Host nucleus</keyword>
<keyword id="KW-0945">Host-virus interaction</keyword>
<keyword id="KW-0378">Hydrolase</keyword>
<keyword id="KW-1104">Inhibition of host RNA polymerase II by virus</keyword>
<keyword id="KW-0464">Manganese</keyword>
<keyword id="KW-0479">Metal-binding</keyword>
<keyword id="KW-0540">Nuclease</keyword>
<keyword id="KW-0597">Phosphoprotein</keyword>
<keyword id="KW-0688">Ribosomal frameshifting</keyword>
<organismHost>
    <name type="scientific">Aves</name>
    <dbReference type="NCBI Taxonomy" id="8782"/>
</organismHost>
<dbReference type="EC" id="3.1.-.-" evidence="2"/>
<dbReference type="EMBL" id="CY005863">
    <property type="protein sequence ID" value="ABB21768.1"/>
    <property type="molecule type" value="Genomic_RNA"/>
</dbReference>
<dbReference type="SMR" id="Q20NV4"/>
<dbReference type="Proteomes" id="UP000008581">
    <property type="component" value="Genome"/>
</dbReference>
<dbReference type="GO" id="GO:0030430">
    <property type="term" value="C:host cell cytoplasm"/>
    <property type="evidence" value="ECO:0007669"/>
    <property type="project" value="UniProtKB-SubCell"/>
</dbReference>
<dbReference type="GO" id="GO:0042025">
    <property type="term" value="C:host cell nucleus"/>
    <property type="evidence" value="ECO:0007669"/>
    <property type="project" value="UniProtKB-SubCell"/>
</dbReference>
<dbReference type="GO" id="GO:0004519">
    <property type="term" value="F:endonuclease activity"/>
    <property type="evidence" value="ECO:0007669"/>
    <property type="project" value="UniProtKB-KW"/>
</dbReference>
<dbReference type="GO" id="GO:0046872">
    <property type="term" value="F:metal ion binding"/>
    <property type="evidence" value="ECO:0007669"/>
    <property type="project" value="UniProtKB-KW"/>
</dbReference>
<dbReference type="GO" id="GO:0003723">
    <property type="term" value="F:RNA binding"/>
    <property type="evidence" value="ECO:0007669"/>
    <property type="project" value="UniProtKB-UniRule"/>
</dbReference>
<dbReference type="GO" id="GO:0075526">
    <property type="term" value="P:cap snatching"/>
    <property type="evidence" value="ECO:0007669"/>
    <property type="project" value="UniProtKB-UniRule"/>
</dbReference>
<dbReference type="GO" id="GO:0006351">
    <property type="term" value="P:DNA-templated transcription"/>
    <property type="evidence" value="ECO:0007669"/>
    <property type="project" value="UniProtKB-UniRule"/>
</dbReference>
<dbReference type="GO" id="GO:0039657">
    <property type="term" value="P:symbiont-mediated suppression of host gene expression"/>
    <property type="evidence" value="ECO:0007669"/>
    <property type="project" value="UniProtKB-KW"/>
</dbReference>
<dbReference type="GO" id="GO:0039523">
    <property type="term" value="P:symbiont-mediated suppression of host mRNA transcription via inhibition of RNA polymerase II activity"/>
    <property type="evidence" value="ECO:0007669"/>
    <property type="project" value="UniProtKB-UniRule"/>
</dbReference>
<dbReference type="GO" id="GO:0039694">
    <property type="term" value="P:viral RNA genome replication"/>
    <property type="evidence" value="ECO:0007669"/>
    <property type="project" value="InterPro"/>
</dbReference>
<dbReference type="GO" id="GO:0075523">
    <property type="term" value="P:viral translational frameshifting"/>
    <property type="evidence" value="ECO:0007669"/>
    <property type="project" value="UniProtKB-KW"/>
</dbReference>
<dbReference type="FunFam" id="3.40.91.90:FF:000001">
    <property type="entry name" value="Polymerase acidic protein"/>
    <property type="match status" value="1"/>
</dbReference>
<dbReference type="Gene3D" id="3.40.91.90">
    <property type="entry name" value="Influenza RNA-dependent RNA polymerase subunit PA, endonuclease domain"/>
    <property type="match status" value="1"/>
</dbReference>
<dbReference type="HAMAP" id="MF_04063">
    <property type="entry name" value="INFV_PA"/>
    <property type="match status" value="1"/>
</dbReference>
<dbReference type="InterPro" id="IPR037534">
    <property type="entry name" value="INFV_PA"/>
</dbReference>
<dbReference type="InterPro" id="IPR001009">
    <property type="entry name" value="PA/PA-X"/>
</dbReference>
<dbReference type="InterPro" id="IPR038372">
    <property type="entry name" value="PA/PA-X_sf"/>
</dbReference>
<dbReference type="Pfam" id="PF00603">
    <property type="entry name" value="Flu_PA"/>
    <property type="match status" value="1"/>
</dbReference>
<sequence>MEDFVRQCFNPMIVELAEKAMKEYGEDPKIETNKFAAICTHLEVCFMYSDFHFIDERGESIIVESGDPNALLKHRFEIIEGRDRTMAWTVVNSICNTTGVEKPKFLPDLYDYKENRFIEIGVTRREVHIYYLEKANKIKSEKTHIHIFSFTGEEMATKADYTLDEESRARIKTRLFTIRQEMASRGLWDSFRQSERGEETIEERFEITGTMRRLADQSLPPNFSSLENFRAYVDGFEPNGCIEGKLSQMSKEVNARIDPFLRTTPRPLRLPEGPPCSQRSKFLLMDALKLSIEDPSHEGEGIPLYDAIKCMKTFFGWKEPNIVKPHERGINPNYLLAWKQVLAELQDIENEDKIPKTKNMKKTSQLKWALGENMAPEKLDFEDCKNVSDLKQYDSDEPEQRSLASWVQSEFNKACELTESSWIELDEIGEDVAPIEHIASMRRNYFTAEVSHCRATEYIMKGVYINTALLNASCAAMDDFQLIPMISKCRTKEGRRKTNLYGFIIKGRSHLRNDTDVVNFVSMEFSLTDPRLEPHKWEKYCVLEIGDMLLRTAIGQVLRPMFLYVRTNGTSKIKMKWGMEMRRCLLQSLQQIESMIEAESSVKEKDMTKEFFENKSETWPIGESPKGVEEGSIGKVCRTLLAKSVFNSLYASPQLEGFSAESRKLLLIVQALRDNLEPGTFDLGGLYEAIEECLINDPWVLLNASWFNSFLTHALK</sequence>
<name>PA_I80AD</name>
<accession>Q20NV4</accession>
<reference key="1">
    <citation type="journal article" date="2006" name="Science">
        <title>Large-scale sequence analysis of avian influenza isolates.</title>
        <authorList>
            <person name="Obenauer J.C."/>
            <person name="Denson J."/>
            <person name="Mehta P.K."/>
            <person name="Su X."/>
            <person name="Mukatira S."/>
            <person name="Finkelstein D.B."/>
            <person name="Xu X."/>
            <person name="Wang J."/>
            <person name="Ma J."/>
            <person name="Fan Y."/>
            <person name="Rakestraw K.M."/>
            <person name="Webster R.G."/>
            <person name="Hoffmann E."/>
            <person name="Krauss S."/>
            <person name="Zheng J."/>
            <person name="Zhang Z."/>
            <person name="Naeve C.W."/>
        </authorList>
    </citation>
    <scope>NUCLEOTIDE SEQUENCE [GENOMIC RNA]</scope>
</reference>
<evidence type="ECO:0000250" key="1">
    <source>
        <dbReference type="UniProtKB" id="P03433"/>
    </source>
</evidence>
<evidence type="ECO:0000255" key="2">
    <source>
        <dbReference type="HAMAP-Rule" id="MF_04063"/>
    </source>
</evidence>